<feature type="chain" id="PRO_0000339648" description="Vacuolar protein sorting-associated protein 29">
    <location>
        <begin position="1"/>
        <end position="186"/>
    </location>
</feature>
<feature type="modified residue" description="N6-acetyllysine" evidence="2">
    <location>
        <position position="54"/>
    </location>
</feature>
<comment type="function">
    <text evidence="1 2">Component of the commander complex that is essential for endosomal recycling of transmembrane cargos; the commander complex is composed of the CCC subcomplex and the retriever subcomplex (By similarity). Component of the retriever complex, which is a heterotrimeric complex related to retromer cargo-selective complex (CSC) and essential for retromer-independent retrieval and recycling of numerous cargos such as integrin alpha-5/beta-1 (ITGA5:ITGB1) (By similarity). Component of the retromer cargo-selective complex (CSC). The CSC is believed to be the core functional component of retromer or respective retromer complex variants acting to prevent missorting of selected transmembrane cargo proteins into the lysosomal degradation pathway. The recruitment of the CSC to the endosomal membrane involves RAB7A and SNX3. The SNX-BAR retromer mediates retrograde transport of cargo proteins from endosomes to the trans-Golgi network (TGN) and is involved in endosome-to-plasma membrane transport for cargo protein recycling. The SNX3-retromer mediates the retrograde endosome-to-TGN transport of WLS distinct from the SNX-BAR retromer pathway. The SNX27-retromer is believed to be involved in endosome-to-plasma membrane trafficking and recycling of a broad spectrum of cargo proteins. The CSC seems to act as recruitment hub for other proteins, such as the WASH complex and TBC1D5. Required to regulate transcytosis of the polymeric immunoglobulin receptor (pIgR-pIgA). In the endosomes, retriever complex drives the retrieval and recycling of NxxY-motif-containing cargo proteins by coupling to SNX17, a cargo essential for the homeostatic maintenance of numerous cell surface proteins associated with processes that include cell migration, cell adhesion, nutrient supply and cell signaling (By similarity). The recruitment of the retriever complex to the endosomal membrane involves CCC and WASH complexes (By similarity). Involved in GLUT1 endosome-to-plasma membrane trafficking; the function is dependent of association with ANKRD27 (By similarity).</text>
</comment>
<comment type="subunit">
    <text evidence="1 2">Component of the commander complex consisting of the CCC subcomplex and the retriever subcomplex (By similarity). Component of the heterotrimeric retriever complex formed by VPS26C, VPS29 and VPS35L; within the complex interacts with VPS35L (By similarity). Component of the heterotrimeric retromer cargo-selective complex (CSC), also described as vacuolar protein sorting subcomplex (VPS), formed by VPS26 (VPS26A or VPS26B), VPS29 and VPS35 (By similarity). The CSC has a highly elongated structure with VPS26 and VPS29 binding independently at opposite distal ends of VPS35 as central platform (By similarity). The CSC is believed to associate with variable sorting nexins to form functionally distinct retromer complex variants. The originally described retromer complex (also called SNX-BAR retromer) is a pentamer containing the CSC and a heterodimeric membrane-deforming subcomplex formed between SNX1 or SNX2 and SNX5 or SNX6 (also called SNX-BAR subcomplex); the respective CSC and SNX-BAR subcomplexes associate with low affinity. The CSC associates with SNX3 to form a SNX3-retromer complex. The CSC associates with SNX27, the WASH complex and the SNX-BAR subcomplex to form the SNX27-retromer complex (By similarity). Interacts with VPS26A, VPS35, SNX1, SNX2, SNX3, SNX27, WASHC5 (By similarity). Interacts with TBC1D5; this interaction is blocked by VPS35L in the retriever complex (By similarity). Interacts with SNX17; the interaction is indirect; SNX17 (via its C-terminus) interacts with the retriever complex (via VPS26C and VPS35L) (By similarity). Interacts with VPS26B and ANKRD27 (By similarity).</text>
</comment>
<comment type="subcellular location">
    <subcellularLocation>
        <location>Cytoplasm</location>
    </subcellularLocation>
    <subcellularLocation>
        <location>Membrane</location>
        <topology>Peripheral membrane protein</topology>
    </subcellularLocation>
    <subcellularLocation>
        <location evidence="1">Endosome membrane</location>
        <topology evidence="1">Peripheral membrane protein</topology>
    </subcellularLocation>
    <subcellularLocation>
        <location evidence="3">Early endosome</location>
    </subcellularLocation>
    <subcellularLocation>
        <location evidence="3">Late endosome</location>
    </subcellularLocation>
</comment>
<comment type="similarity">
    <text evidence="3">Belongs to the VPS29 family.</text>
</comment>
<evidence type="ECO:0000250" key="1">
    <source>
        <dbReference type="UniProtKB" id="Q9QZ88"/>
    </source>
</evidence>
<evidence type="ECO:0000250" key="2">
    <source>
        <dbReference type="UniProtKB" id="Q9UBQ0"/>
    </source>
</evidence>
<evidence type="ECO:0000305" key="3"/>
<dbReference type="EMBL" id="BC102341">
    <property type="protein sequence ID" value="AAI02342.1"/>
    <property type="molecule type" value="mRNA"/>
</dbReference>
<dbReference type="RefSeq" id="NP_001029627.1">
    <property type="nucleotide sequence ID" value="NM_001034455.2"/>
</dbReference>
<dbReference type="SMR" id="Q3T0M0"/>
<dbReference type="FunCoup" id="Q3T0M0">
    <property type="interactions" value="3728"/>
</dbReference>
<dbReference type="STRING" id="9913.ENSBTAP00000011076"/>
<dbReference type="PaxDb" id="9913-ENSBTAP00000011076"/>
<dbReference type="Ensembl" id="ENSBTAT00000102320.1">
    <property type="protein sequence ID" value="ENSBTAP00000081267.1"/>
    <property type="gene ID" value="ENSBTAG00000008417.7"/>
</dbReference>
<dbReference type="GeneID" id="513840"/>
<dbReference type="KEGG" id="bta:513840"/>
<dbReference type="CTD" id="51699"/>
<dbReference type="VEuPathDB" id="HostDB:ENSBTAG00000008417"/>
<dbReference type="VGNC" id="VGNC:36816">
    <property type="gene designation" value="VPS29"/>
</dbReference>
<dbReference type="eggNOG" id="KOG3325">
    <property type="taxonomic scope" value="Eukaryota"/>
</dbReference>
<dbReference type="GeneTree" id="ENSGT00390000012669"/>
<dbReference type="HOGENOM" id="CLU_063749_0_1_1"/>
<dbReference type="InParanoid" id="Q3T0M0"/>
<dbReference type="OMA" id="VRGNMDY"/>
<dbReference type="OrthoDB" id="10258130at2759"/>
<dbReference type="Reactome" id="R-BTA-3238698">
    <property type="pathway name" value="WNT ligand biogenesis and trafficking"/>
</dbReference>
<dbReference type="Proteomes" id="UP000009136">
    <property type="component" value="Chromosome 17"/>
</dbReference>
<dbReference type="Bgee" id="ENSBTAG00000008417">
    <property type="expression patterns" value="Expressed in oocyte and 104 other cell types or tissues"/>
</dbReference>
<dbReference type="GO" id="GO:0005829">
    <property type="term" value="C:cytosol"/>
    <property type="evidence" value="ECO:0007669"/>
    <property type="project" value="GOC"/>
</dbReference>
<dbReference type="GO" id="GO:0005769">
    <property type="term" value="C:early endosome"/>
    <property type="evidence" value="ECO:0007669"/>
    <property type="project" value="UniProtKB-SubCell"/>
</dbReference>
<dbReference type="GO" id="GO:0005768">
    <property type="term" value="C:endosome"/>
    <property type="evidence" value="ECO:0000318"/>
    <property type="project" value="GO_Central"/>
</dbReference>
<dbReference type="GO" id="GO:0010008">
    <property type="term" value="C:endosome membrane"/>
    <property type="evidence" value="ECO:0007669"/>
    <property type="project" value="UniProtKB-SubCell"/>
</dbReference>
<dbReference type="GO" id="GO:0005770">
    <property type="term" value="C:late endosome"/>
    <property type="evidence" value="ECO:0007669"/>
    <property type="project" value="UniProtKB-SubCell"/>
</dbReference>
<dbReference type="GO" id="GO:0030904">
    <property type="term" value="C:retromer complex"/>
    <property type="evidence" value="ECO:0000250"/>
    <property type="project" value="UniProtKB"/>
</dbReference>
<dbReference type="GO" id="GO:0046872">
    <property type="term" value="F:metal ion binding"/>
    <property type="evidence" value="ECO:0007669"/>
    <property type="project" value="UniProtKB-KW"/>
</dbReference>
<dbReference type="GO" id="GO:0032456">
    <property type="term" value="P:endocytic recycling"/>
    <property type="evidence" value="ECO:0000250"/>
    <property type="project" value="UniProtKB"/>
</dbReference>
<dbReference type="GO" id="GO:0006886">
    <property type="term" value="P:intracellular protein transport"/>
    <property type="evidence" value="ECO:0000318"/>
    <property type="project" value="GO_Central"/>
</dbReference>
<dbReference type="GO" id="GO:0042147">
    <property type="term" value="P:retrograde transport, endosome to Golgi"/>
    <property type="evidence" value="ECO:0000318"/>
    <property type="project" value="GO_Central"/>
</dbReference>
<dbReference type="CDD" id="cd07394">
    <property type="entry name" value="MPP_Vps29"/>
    <property type="match status" value="1"/>
</dbReference>
<dbReference type="FunFam" id="3.60.21.10:FF:000009">
    <property type="entry name" value="Vacuolar protein sorting-associated protein 29"/>
    <property type="match status" value="1"/>
</dbReference>
<dbReference type="Gene3D" id="3.60.21.10">
    <property type="match status" value="1"/>
</dbReference>
<dbReference type="InterPro" id="IPR024654">
    <property type="entry name" value="Calcineurin-like_PHP_lpxH"/>
</dbReference>
<dbReference type="InterPro" id="IPR029052">
    <property type="entry name" value="Metallo-depent_PP-like"/>
</dbReference>
<dbReference type="InterPro" id="IPR000979">
    <property type="entry name" value="Phosphodiesterase_MJ0936/Vps29"/>
</dbReference>
<dbReference type="InterPro" id="IPR028661">
    <property type="entry name" value="Vps29"/>
</dbReference>
<dbReference type="NCBIfam" id="TIGR00040">
    <property type="entry name" value="yfcE"/>
    <property type="match status" value="1"/>
</dbReference>
<dbReference type="PANTHER" id="PTHR11124">
    <property type="entry name" value="VACUOLAR SORTING PROTEIN VPS29"/>
    <property type="match status" value="1"/>
</dbReference>
<dbReference type="Pfam" id="PF12850">
    <property type="entry name" value="Metallophos_2"/>
    <property type="match status" value="1"/>
</dbReference>
<dbReference type="SUPFAM" id="SSF56300">
    <property type="entry name" value="Metallo-dependent phosphatases"/>
    <property type="match status" value="1"/>
</dbReference>
<organism>
    <name type="scientific">Bos taurus</name>
    <name type="common">Bovine</name>
    <dbReference type="NCBI Taxonomy" id="9913"/>
    <lineage>
        <taxon>Eukaryota</taxon>
        <taxon>Metazoa</taxon>
        <taxon>Chordata</taxon>
        <taxon>Craniata</taxon>
        <taxon>Vertebrata</taxon>
        <taxon>Euteleostomi</taxon>
        <taxon>Mammalia</taxon>
        <taxon>Eutheria</taxon>
        <taxon>Laurasiatheria</taxon>
        <taxon>Artiodactyla</taxon>
        <taxon>Ruminantia</taxon>
        <taxon>Pecora</taxon>
        <taxon>Bovidae</taxon>
        <taxon>Bovinae</taxon>
        <taxon>Bos</taxon>
    </lineage>
</organism>
<protein>
    <recommendedName>
        <fullName>Vacuolar protein sorting-associated protein 29</fullName>
    </recommendedName>
    <alternativeName>
        <fullName>Vesicle protein sorting 29</fullName>
    </alternativeName>
</protein>
<sequence>MAGHRLVLVLGDLHIPHRCNSLPAKFKKLLVPGKIQHILCTGNLCTKESYDYLKTLAGDVHIVRGDFDENLNYPEQKVVTVGQFKIGLIHGHQVIPWGDMASLALLQRQFDVDILISGHTHKFEAFEHENKFYINPGSATGAYNALETNIIPSFVLMDIQASTVVTYVYQLIGDDVKVERIEYKKS</sequence>
<keyword id="KW-0007">Acetylation</keyword>
<keyword id="KW-0963">Cytoplasm</keyword>
<keyword id="KW-0967">Endosome</keyword>
<keyword id="KW-0472">Membrane</keyword>
<keyword id="KW-0479">Metal-binding</keyword>
<keyword id="KW-0653">Protein transport</keyword>
<keyword id="KW-1185">Reference proteome</keyword>
<keyword id="KW-0813">Transport</keyword>
<keyword id="KW-0862">Zinc</keyword>
<accession>Q3T0M0</accession>
<proteinExistence type="evidence at transcript level"/>
<name>VPS29_BOVIN</name>
<gene>
    <name type="primary">VPS29</name>
</gene>
<reference key="1">
    <citation type="submission" date="2005-08" db="EMBL/GenBank/DDBJ databases">
        <authorList>
            <consortium name="NIH - Mammalian Gene Collection (MGC) project"/>
        </authorList>
    </citation>
    <scope>NUCLEOTIDE SEQUENCE [LARGE SCALE MRNA]</scope>
    <source>
        <strain>Crossbred X Angus</strain>
        <tissue>Ileum</tissue>
    </source>
</reference>